<proteinExistence type="inferred from homology"/>
<comment type="function">
    <text evidence="1">Catalyzes the condensation of (S)-aspartate-beta-semialdehyde [(S)-ASA] and pyruvate to 4-hydroxy-tetrahydrodipicolinate (HTPA).</text>
</comment>
<comment type="catalytic activity">
    <reaction evidence="1">
        <text>L-aspartate 4-semialdehyde + pyruvate = (2S,4S)-4-hydroxy-2,3,4,5-tetrahydrodipicolinate + H2O + H(+)</text>
        <dbReference type="Rhea" id="RHEA:34171"/>
        <dbReference type="ChEBI" id="CHEBI:15361"/>
        <dbReference type="ChEBI" id="CHEBI:15377"/>
        <dbReference type="ChEBI" id="CHEBI:15378"/>
        <dbReference type="ChEBI" id="CHEBI:67139"/>
        <dbReference type="ChEBI" id="CHEBI:537519"/>
        <dbReference type="EC" id="4.3.3.7"/>
    </reaction>
</comment>
<comment type="pathway">
    <text evidence="1">Amino-acid biosynthesis; L-lysine biosynthesis via DAP pathway; (S)-tetrahydrodipicolinate from L-aspartate: step 3/4.</text>
</comment>
<comment type="subunit">
    <text evidence="1">Homodimer.</text>
</comment>
<comment type="subcellular location">
    <subcellularLocation>
        <location evidence="1">Cytoplasm</location>
    </subcellularLocation>
</comment>
<comment type="similarity">
    <text evidence="1">Belongs to the DapA family.</text>
</comment>
<comment type="caution">
    <text evidence="2">Was originally thought to be a dihydrodipicolinate synthase (DHDPS), catalyzing the condensation of (S)-aspartate-beta-semialdehyde [(S)-ASA] and pyruvate to dihydrodipicolinate (DHDP). However, it was shown in E.coli that the product of the enzymatic reaction is not dihydrodipicolinate but in fact (4S)-4-hydroxy-2,3,4,5-tetrahydro-(2S)-dipicolinic acid (HTPA), and that the consecutive dehydration reaction leading to DHDP is not spontaneous but catalyzed by DapB.</text>
</comment>
<name>DAPA_STAAS</name>
<organism>
    <name type="scientific">Staphylococcus aureus (strain MSSA476)</name>
    <dbReference type="NCBI Taxonomy" id="282459"/>
    <lineage>
        <taxon>Bacteria</taxon>
        <taxon>Bacillati</taxon>
        <taxon>Bacillota</taxon>
        <taxon>Bacilli</taxon>
        <taxon>Bacillales</taxon>
        <taxon>Staphylococcaceae</taxon>
        <taxon>Staphylococcus</taxon>
    </lineage>
</organism>
<feature type="chain" id="PRO_0000103158" description="4-hydroxy-tetrahydrodipicolinate synthase">
    <location>
        <begin position="1"/>
        <end position="295"/>
    </location>
</feature>
<feature type="active site" description="Proton donor/acceptor" evidence="1">
    <location>
        <position position="135"/>
    </location>
</feature>
<feature type="active site" description="Schiff-base intermediate with substrate" evidence="1">
    <location>
        <position position="163"/>
    </location>
</feature>
<feature type="binding site" evidence="1">
    <location>
        <position position="47"/>
    </location>
    <ligand>
        <name>pyruvate</name>
        <dbReference type="ChEBI" id="CHEBI:15361"/>
    </ligand>
</feature>
<feature type="binding site" evidence="1">
    <location>
        <position position="206"/>
    </location>
    <ligand>
        <name>pyruvate</name>
        <dbReference type="ChEBI" id="CHEBI:15361"/>
    </ligand>
</feature>
<feature type="site" description="Part of a proton relay during catalysis" evidence="1">
    <location>
        <position position="46"/>
    </location>
</feature>
<feature type="site" description="Part of a proton relay during catalysis" evidence="1">
    <location>
        <position position="109"/>
    </location>
</feature>
<accession>Q6G9G6</accession>
<sequence>MTHLFEGVGVALTTPFTNNKINIEALKTHVNFLLENNAQAIIVNGTTAESPTLTTDEKERILKTVIDLVDKRVPVIAGTGTNDTEKSIQASIQAKALGADAIMLITPYYNKTNQRGLVKHFEAIADAVKLPVVLYNVPSRTNMTIEPETVEILSQHPYIVALKDATNDFEYLEEVKKRIDTNSFALYSGNDDNVVEYYQRGGQGVISVIANVIPKEFQALYDAQQSGLDIQDQFKPIGTLLSALSVDINPIPIKALTSYLGFGNYELRLPLVSLEDTDTKVLREAYDTFKAGENE</sequence>
<dbReference type="EC" id="4.3.3.7" evidence="1"/>
<dbReference type="EMBL" id="BX571857">
    <property type="protein sequence ID" value="CAG43112.1"/>
    <property type="molecule type" value="Genomic_DNA"/>
</dbReference>
<dbReference type="RefSeq" id="WP_000149256.1">
    <property type="nucleotide sequence ID" value="NC_002953.3"/>
</dbReference>
<dbReference type="SMR" id="Q6G9G6"/>
<dbReference type="KEGG" id="sas:SAS1336"/>
<dbReference type="HOGENOM" id="CLU_049343_7_0_9"/>
<dbReference type="UniPathway" id="UPA00034">
    <property type="reaction ID" value="UER00017"/>
</dbReference>
<dbReference type="GO" id="GO:0005829">
    <property type="term" value="C:cytosol"/>
    <property type="evidence" value="ECO:0007669"/>
    <property type="project" value="TreeGrafter"/>
</dbReference>
<dbReference type="GO" id="GO:0008840">
    <property type="term" value="F:4-hydroxy-tetrahydrodipicolinate synthase activity"/>
    <property type="evidence" value="ECO:0007669"/>
    <property type="project" value="UniProtKB-UniRule"/>
</dbReference>
<dbReference type="GO" id="GO:0019877">
    <property type="term" value="P:diaminopimelate biosynthetic process"/>
    <property type="evidence" value="ECO:0007669"/>
    <property type="project" value="UniProtKB-UniRule"/>
</dbReference>
<dbReference type="GO" id="GO:0009089">
    <property type="term" value="P:lysine biosynthetic process via diaminopimelate"/>
    <property type="evidence" value="ECO:0007669"/>
    <property type="project" value="UniProtKB-UniRule"/>
</dbReference>
<dbReference type="CDD" id="cd00950">
    <property type="entry name" value="DHDPS"/>
    <property type="match status" value="1"/>
</dbReference>
<dbReference type="Gene3D" id="3.20.20.70">
    <property type="entry name" value="Aldolase class I"/>
    <property type="match status" value="1"/>
</dbReference>
<dbReference type="HAMAP" id="MF_00418">
    <property type="entry name" value="DapA"/>
    <property type="match status" value="1"/>
</dbReference>
<dbReference type="InterPro" id="IPR013785">
    <property type="entry name" value="Aldolase_TIM"/>
</dbReference>
<dbReference type="InterPro" id="IPR005263">
    <property type="entry name" value="DapA"/>
</dbReference>
<dbReference type="InterPro" id="IPR002220">
    <property type="entry name" value="DapA-like"/>
</dbReference>
<dbReference type="InterPro" id="IPR020625">
    <property type="entry name" value="Schiff_base-form_aldolases_AS"/>
</dbReference>
<dbReference type="NCBIfam" id="TIGR00674">
    <property type="entry name" value="dapA"/>
    <property type="match status" value="1"/>
</dbReference>
<dbReference type="PANTHER" id="PTHR12128:SF66">
    <property type="entry name" value="4-HYDROXY-2-OXOGLUTARATE ALDOLASE, MITOCHONDRIAL"/>
    <property type="match status" value="1"/>
</dbReference>
<dbReference type="PANTHER" id="PTHR12128">
    <property type="entry name" value="DIHYDRODIPICOLINATE SYNTHASE"/>
    <property type="match status" value="1"/>
</dbReference>
<dbReference type="Pfam" id="PF00701">
    <property type="entry name" value="DHDPS"/>
    <property type="match status" value="1"/>
</dbReference>
<dbReference type="PIRSF" id="PIRSF001365">
    <property type="entry name" value="DHDPS"/>
    <property type="match status" value="1"/>
</dbReference>
<dbReference type="PRINTS" id="PR00146">
    <property type="entry name" value="DHPICSNTHASE"/>
</dbReference>
<dbReference type="SMART" id="SM01130">
    <property type="entry name" value="DHDPS"/>
    <property type="match status" value="1"/>
</dbReference>
<dbReference type="SUPFAM" id="SSF51569">
    <property type="entry name" value="Aldolase"/>
    <property type="match status" value="1"/>
</dbReference>
<dbReference type="PROSITE" id="PS00666">
    <property type="entry name" value="DHDPS_2"/>
    <property type="match status" value="1"/>
</dbReference>
<gene>
    <name evidence="1" type="primary">dapA</name>
    <name type="ordered locus">SAS1336</name>
</gene>
<keyword id="KW-0028">Amino-acid biosynthesis</keyword>
<keyword id="KW-0963">Cytoplasm</keyword>
<keyword id="KW-0220">Diaminopimelate biosynthesis</keyword>
<keyword id="KW-0456">Lyase</keyword>
<keyword id="KW-0457">Lysine biosynthesis</keyword>
<keyword id="KW-0704">Schiff base</keyword>
<reference key="1">
    <citation type="journal article" date="2004" name="Proc. Natl. Acad. Sci. U.S.A.">
        <title>Complete genomes of two clinical Staphylococcus aureus strains: evidence for the rapid evolution of virulence and drug resistance.</title>
        <authorList>
            <person name="Holden M.T.G."/>
            <person name="Feil E.J."/>
            <person name="Lindsay J.A."/>
            <person name="Peacock S.J."/>
            <person name="Day N.P.J."/>
            <person name="Enright M.C."/>
            <person name="Foster T.J."/>
            <person name="Moore C.E."/>
            <person name="Hurst L."/>
            <person name="Atkin R."/>
            <person name="Barron A."/>
            <person name="Bason N."/>
            <person name="Bentley S.D."/>
            <person name="Chillingworth C."/>
            <person name="Chillingworth T."/>
            <person name="Churcher C."/>
            <person name="Clark L."/>
            <person name="Corton C."/>
            <person name="Cronin A."/>
            <person name="Doggett J."/>
            <person name="Dowd L."/>
            <person name="Feltwell T."/>
            <person name="Hance Z."/>
            <person name="Harris B."/>
            <person name="Hauser H."/>
            <person name="Holroyd S."/>
            <person name="Jagels K."/>
            <person name="James K.D."/>
            <person name="Lennard N."/>
            <person name="Line A."/>
            <person name="Mayes R."/>
            <person name="Moule S."/>
            <person name="Mungall K."/>
            <person name="Ormond D."/>
            <person name="Quail M.A."/>
            <person name="Rabbinowitsch E."/>
            <person name="Rutherford K.M."/>
            <person name="Sanders M."/>
            <person name="Sharp S."/>
            <person name="Simmonds M."/>
            <person name="Stevens K."/>
            <person name="Whitehead S."/>
            <person name="Barrell B.G."/>
            <person name="Spratt B.G."/>
            <person name="Parkhill J."/>
        </authorList>
    </citation>
    <scope>NUCLEOTIDE SEQUENCE [LARGE SCALE GENOMIC DNA]</scope>
    <source>
        <strain>MSSA476</strain>
    </source>
</reference>
<protein>
    <recommendedName>
        <fullName evidence="1">4-hydroxy-tetrahydrodipicolinate synthase</fullName>
        <shortName evidence="1">HTPA synthase</shortName>
        <ecNumber evidence="1">4.3.3.7</ecNumber>
    </recommendedName>
</protein>
<evidence type="ECO:0000255" key="1">
    <source>
        <dbReference type="HAMAP-Rule" id="MF_00418"/>
    </source>
</evidence>
<evidence type="ECO:0000305" key="2"/>